<protein>
    <recommendedName>
        <fullName evidence="1">Glutamyl-tRNA reductase</fullName>
        <shortName evidence="1">GluTR</shortName>
        <ecNumber evidence="1">1.2.1.70</ecNumber>
    </recommendedName>
</protein>
<sequence>MHFIAISINHRTADVALREQVAFRDDALRIAHEDLYETKSILENVILSTCNRTEVYAVVDQIHTGRYYIQRFLARAFGFEVDDIKAMSEVKVGDEAVEHLLRVTSGLDSIVLGETQILGQIRDAFFLAQSTGTTGTIFNHLFKQAITFAKRAHNETDIADNAVSVSYAAVELAKKVFGKLKSKQAIIIGAGEMSELSLLNLLGSGITDITVVNRTIENAMKLAAKHQVKYDELSSLPNLLESADIVISSTSAQSYIITNEMIERIAENRKQDSLVLIDIAVPRDIEPGISAITNIFNYDVDDLKGLVDANLRERQLAAATISEQIPAEIHAHNEWISMLGVVPVIRALREKAMAIQAETMDSIDRKLPGLSERERKIISKHTKSIINQMLKDPIKQAKELSSDKKSNEKLELFQNIFDIEAECPHEQAKQQKESKVKEISARRIFSFE</sequence>
<reference key="1">
    <citation type="journal article" date="2008" name="J. Bacteriol.">
        <title>Genome sequence of Staphylococcus aureus strain Newman and comparative analysis of staphylococcal genomes: polymorphism and evolution of two major pathogenicity islands.</title>
        <authorList>
            <person name="Baba T."/>
            <person name="Bae T."/>
            <person name="Schneewind O."/>
            <person name="Takeuchi F."/>
            <person name="Hiramatsu K."/>
        </authorList>
    </citation>
    <scope>NUCLEOTIDE SEQUENCE [LARGE SCALE GENOMIC DNA]</scope>
    <source>
        <strain>Newman</strain>
    </source>
</reference>
<proteinExistence type="inferred from homology"/>
<dbReference type="EC" id="1.2.1.70" evidence="1"/>
<dbReference type="EMBL" id="AP009351">
    <property type="protein sequence ID" value="BAF67838.1"/>
    <property type="molecule type" value="Genomic_DNA"/>
</dbReference>
<dbReference type="RefSeq" id="WP_000545451.1">
    <property type="nucleotide sequence ID" value="NZ_JBBIAE010000001.1"/>
</dbReference>
<dbReference type="SMR" id="A6QHK6"/>
<dbReference type="KEGG" id="sae:NWMN_1566"/>
<dbReference type="HOGENOM" id="CLU_035113_2_2_9"/>
<dbReference type="UniPathway" id="UPA00251">
    <property type="reaction ID" value="UER00316"/>
</dbReference>
<dbReference type="Proteomes" id="UP000006386">
    <property type="component" value="Chromosome"/>
</dbReference>
<dbReference type="GO" id="GO:0008883">
    <property type="term" value="F:glutamyl-tRNA reductase activity"/>
    <property type="evidence" value="ECO:0007669"/>
    <property type="project" value="UniProtKB-UniRule"/>
</dbReference>
<dbReference type="GO" id="GO:0050661">
    <property type="term" value="F:NADP binding"/>
    <property type="evidence" value="ECO:0007669"/>
    <property type="project" value="InterPro"/>
</dbReference>
<dbReference type="GO" id="GO:0006782">
    <property type="term" value="P:protoporphyrinogen IX biosynthetic process"/>
    <property type="evidence" value="ECO:0007669"/>
    <property type="project" value="UniProtKB-UniRule"/>
</dbReference>
<dbReference type="CDD" id="cd05213">
    <property type="entry name" value="NAD_bind_Glutamyl_tRNA_reduct"/>
    <property type="match status" value="1"/>
</dbReference>
<dbReference type="FunFam" id="3.30.460.30:FF:000001">
    <property type="entry name" value="Glutamyl-tRNA reductase"/>
    <property type="match status" value="1"/>
</dbReference>
<dbReference type="FunFam" id="3.40.50.720:FF:000031">
    <property type="entry name" value="Glutamyl-tRNA reductase"/>
    <property type="match status" value="1"/>
</dbReference>
<dbReference type="Gene3D" id="3.30.460.30">
    <property type="entry name" value="Glutamyl-tRNA reductase, N-terminal domain"/>
    <property type="match status" value="1"/>
</dbReference>
<dbReference type="Gene3D" id="3.40.50.720">
    <property type="entry name" value="NAD(P)-binding Rossmann-like Domain"/>
    <property type="match status" value="1"/>
</dbReference>
<dbReference type="HAMAP" id="MF_00087">
    <property type="entry name" value="Glu_tRNA_reductase"/>
    <property type="match status" value="1"/>
</dbReference>
<dbReference type="InterPro" id="IPR000343">
    <property type="entry name" value="4pyrrol_synth_GluRdtase"/>
</dbReference>
<dbReference type="InterPro" id="IPR015896">
    <property type="entry name" value="4pyrrol_synth_GluRdtase_dimer"/>
</dbReference>
<dbReference type="InterPro" id="IPR015895">
    <property type="entry name" value="4pyrrol_synth_GluRdtase_N"/>
</dbReference>
<dbReference type="InterPro" id="IPR018214">
    <property type="entry name" value="GluRdtase_CS"/>
</dbReference>
<dbReference type="InterPro" id="IPR036453">
    <property type="entry name" value="GluRdtase_dimer_dom_sf"/>
</dbReference>
<dbReference type="InterPro" id="IPR036343">
    <property type="entry name" value="GluRdtase_N_sf"/>
</dbReference>
<dbReference type="InterPro" id="IPR036291">
    <property type="entry name" value="NAD(P)-bd_dom_sf"/>
</dbReference>
<dbReference type="InterPro" id="IPR006151">
    <property type="entry name" value="Shikm_DH/Glu-tRNA_Rdtase"/>
</dbReference>
<dbReference type="NCBIfam" id="TIGR01035">
    <property type="entry name" value="hemA"/>
    <property type="match status" value="1"/>
</dbReference>
<dbReference type="PANTHER" id="PTHR43120">
    <property type="entry name" value="GLUTAMYL-TRNA REDUCTASE 1, CHLOROPLASTIC"/>
    <property type="match status" value="1"/>
</dbReference>
<dbReference type="PANTHER" id="PTHR43120:SF1">
    <property type="entry name" value="GLUTAMYL-TRNA REDUCTASE 1, CHLOROPLASTIC"/>
    <property type="match status" value="1"/>
</dbReference>
<dbReference type="Pfam" id="PF00745">
    <property type="entry name" value="GlutR_dimer"/>
    <property type="match status" value="1"/>
</dbReference>
<dbReference type="Pfam" id="PF05201">
    <property type="entry name" value="GlutR_N"/>
    <property type="match status" value="1"/>
</dbReference>
<dbReference type="Pfam" id="PF01488">
    <property type="entry name" value="Shikimate_DH"/>
    <property type="match status" value="1"/>
</dbReference>
<dbReference type="PIRSF" id="PIRSF000445">
    <property type="entry name" value="4pyrrol_synth_GluRdtase"/>
    <property type="match status" value="1"/>
</dbReference>
<dbReference type="SUPFAM" id="SSF69742">
    <property type="entry name" value="Glutamyl tRNA-reductase catalytic, N-terminal domain"/>
    <property type="match status" value="1"/>
</dbReference>
<dbReference type="SUPFAM" id="SSF69075">
    <property type="entry name" value="Glutamyl tRNA-reductase dimerization domain"/>
    <property type="match status" value="1"/>
</dbReference>
<dbReference type="SUPFAM" id="SSF51735">
    <property type="entry name" value="NAD(P)-binding Rossmann-fold domains"/>
    <property type="match status" value="1"/>
</dbReference>
<dbReference type="PROSITE" id="PS00747">
    <property type="entry name" value="GLUTR"/>
    <property type="match status" value="1"/>
</dbReference>
<gene>
    <name evidence="1" type="primary">hemA</name>
    <name type="ordered locus">NWMN_1566</name>
</gene>
<keyword id="KW-0521">NADP</keyword>
<keyword id="KW-0560">Oxidoreductase</keyword>
<keyword id="KW-0627">Porphyrin biosynthesis</keyword>
<comment type="function">
    <text evidence="1">Catalyzes the NADPH-dependent reduction of glutamyl-tRNA(Glu) to glutamate 1-semialdehyde (GSA).</text>
</comment>
<comment type="catalytic activity">
    <reaction evidence="1">
        <text>(S)-4-amino-5-oxopentanoate + tRNA(Glu) + NADP(+) = L-glutamyl-tRNA(Glu) + NADPH + H(+)</text>
        <dbReference type="Rhea" id="RHEA:12344"/>
        <dbReference type="Rhea" id="RHEA-COMP:9663"/>
        <dbReference type="Rhea" id="RHEA-COMP:9680"/>
        <dbReference type="ChEBI" id="CHEBI:15378"/>
        <dbReference type="ChEBI" id="CHEBI:57501"/>
        <dbReference type="ChEBI" id="CHEBI:57783"/>
        <dbReference type="ChEBI" id="CHEBI:58349"/>
        <dbReference type="ChEBI" id="CHEBI:78442"/>
        <dbReference type="ChEBI" id="CHEBI:78520"/>
        <dbReference type="EC" id="1.2.1.70"/>
    </reaction>
</comment>
<comment type="pathway">
    <text evidence="1">Porphyrin-containing compound metabolism; protoporphyrin-IX biosynthesis; 5-aminolevulinate from L-glutamyl-tRNA(Glu): step 1/2.</text>
</comment>
<comment type="subunit">
    <text evidence="1">Homodimer.</text>
</comment>
<comment type="domain">
    <text evidence="1">Possesses an unusual extended V-shaped dimeric structure with each monomer consisting of three distinct domains arranged along a curved 'spinal' alpha-helix. The N-terminal catalytic domain specifically recognizes the glutamate moiety of the substrate. The second domain is the NADPH-binding domain, and the third C-terminal domain is responsible for dimerization.</text>
</comment>
<comment type="miscellaneous">
    <text evidence="1">During catalysis, the active site Cys acts as a nucleophile attacking the alpha-carbonyl group of tRNA-bound glutamate with the formation of a thioester intermediate between enzyme and glutamate, and the concomitant release of tRNA(Glu). The thioester intermediate is finally reduced by direct hydride transfer from NADPH, to form the product GSA.</text>
</comment>
<comment type="similarity">
    <text evidence="1">Belongs to the glutamyl-tRNA reductase family.</text>
</comment>
<feature type="chain" id="PRO_1000071249" description="Glutamyl-tRNA reductase">
    <location>
        <begin position="1"/>
        <end position="448"/>
    </location>
</feature>
<feature type="active site" description="Nucleophile" evidence="1">
    <location>
        <position position="50"/>
    </location>
</feature>
<feature type="binding site" evidence="1">
    <location>
        <begin position="49"/>
        <end position="52"/>
    </location>
    <ligand>
        <name>substrate</name>
    </ligand>
</feature>
<feature type="binding site" evidence="1">
    <location>
        <position position="109"/>
    </location>
    <ligand>
        <name>substrate</name>
    </ligand>
</feature>
<feature type="binding site" evidence="1">
    <location>
        <begin position="114"/>
        <end position="116"/>
    </location>
    <ligand>
        <name>substrate</name>
    </ligand>
</feature>
<feature type="binding site" evidence="1">
    <location>
        <position position="120"/>
    </location>
    <ligand>
        <name>substrate</name>
    </ligand>
</feature>
<feature type="binding site" evidence="1">
    <location>
        <begin position="189"/>
        <end position="194"/>
    </location>
    <ligand>
        <name>NADP(+)</name>
        <dbReference type="ChEBI" id="CHEBI:58349"/>
    </ligand>
</feature>
<feature type="site" description="Important for activity" evidence="1">
    <location>
        <position position="99"/>
    </location>
</feature>
<name>HEM1_STAAE</name>
<evidence type="ECO:0000255" key="1">
    <source>
        <dbReference type="HAMAP-Rule" id="MF_00087"/>
    </source>
</evidence>
<organism>
    <name type="scientific">Staphylococcus aureus (strain Newman)</name>
    <dbReference type="NCBI Taxonomy" id="426430"/>
    <lineage>
        <taxon>Bacteria</taxon>
        <taxon>Bacillati</taxon>
        <taxon>Bacillota</taxon>
        <taxon>Bacilli</taxon>
        <taxon>Bacillales</taxon>
        <taxon>Staphylococcaceae</taxon>
        <taxon>Staphylococcus</taxon>
    </lineage>
</organism>
<accession>A6QHK6</accession>